<dbReference type="GO" id="GO:0005576">
    <property type="term" value="C:extracellular region"/>
    <property type="evidence" value="ECO:0007669"/>
    <property type="project" value="UniProtKB-SubCell"/>
</dbReference>
<dbReference type="GO" id="GO:0042742">
    <property type="term" value="P:defense response to bacterium"/>
    <property type="evidence" value="ECO:0007669"/>
    <property type="project" value="UniProtKB-KW"/>
</dbReference>
<dbReference type="GO" id="GO:0031640">
    <property type="term" value="P:killing of cells of another organism"/>
    <property type="evidence" value="ECO:0007669"/>
    <property type="project" value="UniProtKB-KW"/>
</dbReference>
<dbReference type="GO" id="GO:0008156">
    <property type="term" value="P:negative regulation of DNA replication"/>
    <property type="evidence" value="ECO:0007669"/>
    <property type="project" value="UniProtKB-KW"/>
</dbReference>
<keyword id="KW-0027">Amidation</keyword>
<keyword id="KW-0044">Antibiotic</keyword>
<keyword id="KW-0929">Antimicrobial</keyword>
<keyword id="KW-0078">Bacteriocin</keyword>
<keyword id="KW-0236">DNA replication inhibitor</keyword>
<keyword id="KW-0488">Methylation</keyword>
<keyword id="KW-0964">Secreted</keyword>
<keyword id="KW-0883">Thioether bond</keyword>
<comment type="function">
    <text evidence="3">Has bacteriocidal activity against Gram-positive bacteria including multi-drug resistant strains such as S.aureus MS9610 and methicillin-resistant S.aureus, but is not active against most Gram-negative bacteria and fungi.</text>
</comment>
<comment type="subcellular location">
    <subcellularLocation>
        <location evidence="3">Secreted</location>
    </subcellularLocation>
</comment>
<comment type="PTM">
    <text>Maturation of thiazole and oxazole containing antibiotics involves the enzymatic condensation of a Cys, Ser or Thr with the alpha-carbonyl of the preceding amino acid to form a thioether or ether bond, then dehydration to form a double bond with the alpha-amino nitrogen. Thiazoline or oxazoline rings are dehydrogenated to form thiazole or oxazole rings.</text>
</comment>
<comment type="PTM">
    <text>Maturation of pyridinyl containing antibiotics involves the cross-linking of a Ser and a Cys-Ser pair usually separated by 7 or 8 residues along the peptide chain. The Ser residues are dehydrated to didehydroalanines, then bonded between their beta carbons. The alpha carbonyl of the Cys condenses with the alpha carbon of the first Ser to form a pyridinyl ring. The ring may be multiply dehydrogenated to form a pyridine ring with loss of the amino nitrogen of the first Ser.</text>
</comment>
<comment type="PTM">
    <text>The diketopiperazine ester in form C may be formed by cyclization and transesterification of the C-terminal dipeptide.</text>
</comment>
<comment type="mass spectrometry" mass="1182.2463" method="FAB" evidence="3">
    <molecule>Amythiamicin A/B</molecule>
    <text>Form A.</text>
</comment>
<comment type="mass spectrometry" mass="1200.2549" method="FAB" evidence="3">
    <molecule>Amythiamicin A/B</molecule>
    <text>Form B.</text>
</comment>
<comment type="mass spectrometry" mass="1183.2285" method="FAB" evidence="3">
    <molecule>Amythiamicin C/D</molecule>
    <text>Form C.</text>
</comment>
<comment type="mass spectrometry" mass="1031.1688" method="FAB" evidence="3">
    <molecule>Amythiamicin C/D</molecule>
    <text>Form D.</text>
</comment>
<comment type="similarity">
    <text evidence="4">Belongs to the thiocillin family.</text>
</comment>
<comment type="caution">
    <text evidence="4">It is possible that the 5-methylthiazole shown as derived from Cys-4 may be instead derived from Thr.</text>
</comment>
<reference key="1">
    <citation type="journal article" date="1994" name="J. Antibiot.">
        <title>Novel antibiotics, amythiamicins. I. Taxonomy, fermentation, isolation, physico-chemical properties, and antimicrobial activity.</title>
        <authorList>
            <person name="Shimanaka K."/>
            <person name="Kinoshita N."/>
            <person name="Iinuma H."/>
            <person name="Hamada M."/>
            <person name="Takeuchi T."/>
        </authorList>
    </citation>
    <scope>FUNCTION</scope>
    <scope>SUBCELLULAR LOCATION</scope>
    <scope>METHYLATION AT CYS-12</scope>
    <scope>MASS SPECTROMETRY</scope>
</reference>
<reference key="2">
    <citation type="journal article" date="2004" name="Chem. Commun. (Camb.)">
        <title>Total synthesis of the thiopeptide amythiamicin D.</title>
        <authorList>
            <person name="Hughes R.A."/>
            <person name="Thompson S.P."/>
            <person name="Alcaraz L."/>
            <person name="Moody C.J."/>
        </authorList>
    </citation>
    <scope>SYNTHESIS</scope>
</reference>
<reference key="3">
    <citation type="journal article" date="1994" name="J. Antibiot.">
        <title>Novel antibiotics, amythiamicins. II. Structure elucidation of amythiamicin D.</title>
        <authorList>
            <person name="Shimanaka K."/>
            <person name="Takahashi Y."/>
            <person name="Iinuma H."/>
            <person name="Naganawa H."/>
            <person name="Takeuchi T."/>
        </authorList>
    </citation>
    <scope>STRUCTURE BY NMR</scope>
</reference>
<reference key="4">
    <citation type="journal article" date="1994" name="J. Antibiot.">
        <title>Novel antibiotics, amythiamicins. III. Structure elucidations of amythiamicins A, B and C.</title>
        <authorList>
            <person name="Shimanaka K."/>
            <person name="Takahashi Y."/>
            <person name="Iinuma H."/>
            <person name="Naganawa H."/>
            <person name="Takeuchi T."/>
        </authorList>
    </citation>
    <scope>STRUCTURE BY NMR</scope>
    <scope>AMIDATION AT PRO-14</scope>
</reference>
<reference key="5">
    <citation type="journal article" date="2006" name="Chem. Commun. (Camb.)">
        <title>Solution structures of thiopeptide antibiotics.</title>
        <authorList>
            <person name="Lewis R.J."/>
            <person name="Hughes R.A."/>
            <person name="Alcaraz L."/>
            <person name="Thompson S.P."/>
            <person name="Moody C.J."/>
        </authorList>
    </citation>
    <scope>STRUCTURE BY NMR</scope>
</reference>
<feature type="peptide" id="PRO_0000368029" description="Amythiamicin A/B">
    <location>
        <begin position="1"/>
        <end position="14"/>
    </location>
</feature>
<feature type="peptide" id="PRO_0000368030" description="Amythiamicin C/D">
    <location>
        <begin position="1"/>
        <end position="12"/>
    </location>
</feature>
<feature type="modified residue" description="N4-methylasparagine" evidence="1">
    <location>
        <position position="3"/>
    </location>
</feature>
<feature type="modified residue" description="Cyclo[(prolylserin)-O-yl] cysteinate; in form C">
    <location>
        <position position="12"/>
    </location>
</feature>
<feature type="modified residue" description="Cysteine methyl ester; in form D" evidence="3">
    <location>
        <position position="12"/>
    </location>
</feature>
<feature type="modified residue" description="Proline amide; in form A and form B" evidence="2">
    <location>
        <position position="14"/>
    </location>
</feature>
<feature type="cross-link" description="Pyridine-2,5-dicarboxylic acid (Ser-Ser) (with C-10)">
    <location>
        <begin position="1"/>
        <end position="11"/>
    </location>
</feature>
<feature type="cross-link" description="Pyridine-2,5-dicarboxylic acid (Ser-Cys) (with S-11)">
    <location>
        <begin position="1"/>
        <end position="10"/>
    </location>
</feature>
<feature type="cross-link" description="Thiazole-4-carboxylic acid (Ser-Cys)">
    <location>
        <begin position="1"/>
        <end position="2"/>
    </location>
</feature>
<feature type="cross-link" description="5-methylthiazole-4-carboxylic acid (Asn-Cys)">
    <location>
        <begin position="3"/>
        <end position="4"/>
    </location>
</feature>
<feature type="cross-link" description="Thiazole-4-carboxylic acid (Val-Cys)">
    <location>
        <begin position="5"/>
        <end position="6"/>
    </location>
</feature>
<feature type="cross-link" description="Thiazole-4-carboxylic acid (Val-Cys)">
    <location>
        <begin position="8"/>
        <end position="9"/>
    </location>
</feature>
<feature type="cross-link" description="Thiazole-4-carboxylic acid (Cys-Cys)">
    <location>
        <begin position="9"/>
        <end position="10"/>
    </location>
</feature>
<feature type="cross-link" description="Thiazole-4-carboxylic acid (Ser-Cys)">
    <location>
        <begin position="11"/>
        <end position="12"/>
    </location>
</feature>
<feature type="cross-link" description="Oxazoline-4-carboxylic acid (Cys-Ser); in form A">
    <location>
        <begin position="12"/>
        <end position="13"/>
    </location>
</feature>
<feature type="unsure residue" description="C or T">
    <location>
        <position position="4"/>
    </location>
</feature>
<sequence length="14" mass="1365">SCNCVCGVCCSCSP</sequence>
<protein>
    <recommendedName>
        <fullName>Amythiamicin A/B</fullName>
    </recommendedName>
    <component>
        <recommendedName>
            <fullName>Amythiamicin C/D</fullName>
        </recommendedName>
    </component>
</protein>
<accession>P0C912</accession>
<proteinExistence type="evidence at protein level"/>
<name>THCL1_AMISM</name>
<organism>
    <name type="scientific">Amycolatopsis sp. (strain MI481-42F4 / FERM P-12739)</name>
    <dbReference type="NCBI Taxonomy" id="613028"/>
    <lineage>
        <taxon>Bacteria</taxon>
        <taxon>Bacillati</taxon>
        <taxon>Actinomycetota</taxon>
        <taxon>Actinomycetes</taxon>
        <taxon>Pseudonocardiales</taxon>
        <taxon>Pseudonocardiaceae</taxon>
        <taxon>Amycolatopsis</taxon>
    </lineage>
</organism>
<evidence type="ECO:0000250" key="1">
    <source>
        <dbReference type="UniProtKB" id="Q7M0J8"/>
    </source>
</evidence>
<evidence type="ECO:0000269" key="2">
    <source>
    </source>
</evidence>
<evidence type="ECO:0000269" key="3">
    <source>
    </source>
</evidence>
<evidence type="ECO:0000305" key="4"/>